<accession>B1WAX6</accession>
<dbReference type="EC" id="3.1.3.46" evidence="3"/>
<dbReference type="EMBL" id="BC161536">
    <property type="protein sequence ID" value="AAI61536.1"/>
    <property type="molecule type" value="mRNA"/>
</dbReference>
<dbReference type="RefSeq" id="NP_001120569.1">
    <property type="nucleotide sequence ID" value="NM_001127097.1"/>
</dbReference>
<dbReference type="SMR" id="B1WAX6"/>
<dbReference type="FunCoup" id="B1WAX6">
    <property type="interactions" value="834"/>
</dbReference>
<dbReference type="STRING" id="8364.ENSXETP00000038380"/>
<dbReference type="PaxDb" id="8364-ENSXETP00000013129"/>
<dbReference type="GeneID" id="100145723"/>
<dbReference type="KEGG" id="xtr:100145723"/>
<dbReference type="AGR" id="Xenbase:XB-GENE-1008472"/>
<dbReference type="CTD" id="57103"/>
<dbReference type="Xenbase" id="XB-GENE-1008472">
    <property type="gene designation" value="tigar"/>
</dbReference>
<dbReference type="eggNOG" id="KOG0235">
    <property type="taxonomic scope" value="Eukaryota"/>
</dbReference>
<dbReference type="InParanoid" id="B1WAX6"/>
<dbReference type="OMA" id="IQCVCIN"/>
<dbReference type="OrthoDB" id="354304at2759"/>
<dbReference type="Reactome" id="R-XTR-5628897">
    <property type="pathway name" value="TP53 Regulates Metabolic Genes"/>
</dbReference>
<dbReference type="Proteomes" id="UP000008143">
    <property type="component" value="Chromosome 3"/>
</dbReference>
<dbReference type="GO" id="GO:0005737">
    <property type="term" value="C:cytoplasm"/>
    <property type="evidence" value="ECO:0000250"/>
    <property type="project" value="UniProtKB"/>
</dbReference>
<dbReference type="GO" id="GO:0005741">
    <property type="term" value="C:mitochondrial outer membrane"/>
    <property type="evidence" value="ECO:0000250"/>
    <property type="project" value="UniProtKB"/>
</dbReference>
<dbReference type="GO" id="GO:0005739">
    <property type="term" value="C:mitochondrion"/>
    <property type="evidence" value="ECO:0000250"/>
    <property type="project" value="UniProtKB"/>
</dbReference>
<dbReference type="GO" id="GO:0005634">
    <property type="term" value="C:nucleus"/>
    <property type="evidence" value="ECO:0000250"/>
    <property type="project" value="UniProtKB"/>
</dbReference>
<dbReference type="GO" id="GO:0004331">
    <property type="term" value="F:fructose-2,6-bisphosphate 2-phosphatase activity"/>
    <property type="evidence" value="ECO:0000250"/>
    <property type="project" value="UniProtKB"/>
</dbReference>
<dbReference type="GO" id="GO:0006915">
    <property type="term" value="P:apoptotic process"/>
    <property type="evidence" value="ECO:0007669"/>
    <property type="project" value="UniProtKB-KW"/>
</dbReference>
<dbReference type="GO" id="GO:0006914">
    <property type="term" value="P:autophagy"/>
    <property type="evidence" value="ECO:0007669"/>
    <property type="project" value="UniProtKB-KW"/>
</dbReference>
<dbReference type="CDD" id="cd07067">
    <property type="entry name" value="HP_PGM_like"/>
    <property type="match status" value="1"/>
</dbReference>
<dbReference type="FunFam" id="3.40.50.1240:FF:000026">
    <property type="entry name" value="Putative fructose-2,6-bisphosphatase TIGAR"/>
    <property type="match status" value="1"/>
</dbReference>
<dbReference type="Gene3D" id="3.40.50.1240">
    <property type="entry name" value="Phosphoglycerate mutase-like"/>
    <property type="match status" value="1"/>
</dbReference>
<dbReference type="InterPro" id="IPR013078">
    <property type="entry name" value="His_Pase_superF_clade-1"/>
</dbReference>
<dbReference type="InterPro" id="IPR029033">
    <property type="entry name" value="His_PPase_superfam"/>
</dbReference>
<dbReference type="InterPro" id="IPR001345">
    <property type="entry name" value="PG/BPGM_mutase_AS"/>
</dbReference>
<dbReference type="InterPro" id="IPR051695">
    <property type="entry name" value="Phosphoglycerate_Mutase"/>
</dbReference>
<dbReference type="PANTHER" id="PTHR46517">
    <property type="entry name" value="FRUCTOSE-2,6-BISPHOSPHATASE TIGAR"/>
    <property type="match status" value="1"/>
</dbReference>
<dbReference type="PANTHER" id="PTHR46517:SF1">
    <property type="entry name" value="FRUCTOSE-2,6-BISPHOSPHATASE TIGAR"/>
    <property type="match status" value="1"/>
</dbReference>
<dbReference type="Pfam" id="PF00300">
    <property type="entry name" value="His_Phos_1"/>
    <property type="match status" value="1"/>
</dbReference>
<dbReference type="SMART" id="SM00855">
    <property type="entry name" value="PGAM"/>
    <property type="match status" value="1"/>
</dbReference>
<dbReference type="SUPFAM" id="SSF53254">
    <property type="entry name" value="Phosphoglycerate mutase-like"/>
    <property type="match status" value="1"/>
</dbReference>
<dbReference type="PROSITE" id="PS00175">
    <property type="entry name" value="PG_MUTASE"/>
    <property type="match status" value="1"/>
</dbReference>
<reference key="1">
    <citation type="submission" date="2008-04" db="EMBL/GenBank/DDBJ databases">
        <authorList>
            <consortium name="NIH - Xenopus Gene Collection (XGC) project"/>
        </authorList>
    </citation>
    <scope>NUCLEOTIDE SEQUENCE [LARGE SCALE MRNA]</scope>
    <source>
        <tissue>Embryo</tissue>
    </source>
</reference>
<name>TIGAR_XENTR</name>
<organism>
    <name type="scientific">Xenopus tropicalis</name>
    <name type="common">Western clawed frog</name>
    <name type="synonym">Silurana tropicalis</name>
    <dbReference type="NCBI Taxonomy" id="8364"/>
    <lineage>
        <taxon>Eukaryota</taxon>
        <taxon>Metazoa</taxon>
        <taxon>Chordata</taxon>
        <taxon>Craniata</taxon>
        <taxon>Vertebrata</taxon>
        <taxon>Euteleostomi</taxon>
        <taxon>Amphibia</taxon>
        <taxon>Batrachia</taxon>
        <taxon>Anura</taxon>
        <taxon>Pipoidea</taxon>
        <taxon>Pipidae</taxon>
        <taxon>Xenopodinae</taxon>
        <taxon>Xenopus</taxon>
        <taxon>Silurana</taxon>
    </lineage>
</organism>
<gene>
    <name evidence="3" type="primary">tigar</name>
</gene>
<protein>
    <recommendedName>
        <fullName evidence="4">Fructose-2,6-bisphosphatase TIGAR</fullName>
        <ecNumber evidence="3">3.1.3.46</ecNumber>
    </recommendedName>
    <alternativeName>
        <fullName evidence="3">TP53-induced glycolysis and apoptosis regulator</fullName>
    </alternativeName>
</protein>
<sequence>MARFALTIVRHGETRYNKEKLLQGQGIDEPLSEIGFKQADAVGRFLSNVRFTHVFSSDLIRAKQTACAIMENNKISEDIKIIYDRRLRERKYGDAEGRPLSELKVMAKKAGDQCPSYTPPGGETLEQVRARAKDFFEYLCRLVLEESSAKEQSELGASGMGGVTSADLGPFVNHNKEPAELGESRDVTVHASVLLVSHGAYMRNWIKYLVEDLQFTFPPELKKSRELPVSPNTGISHFIVTVSSATPRKPEIQCVCINLHSHLSDINADTSHYQV</sequence>
<proteinExistence type="evidence at transcript level"/>
<feature type="chain" id="PRO_0000363070" description="Fructose-2,6-bisphosphatase TIGAR">
    <location>
        <begin position="1"/>
        <end position="275"/>
    </location>
</feature>
<feature type="active site" description="Tele-phosphohistidine intermediate" evidence="1">
    <location>
        <position position="11"/>
    </location>
</feature>
<feature type="active site" description="Proton donor/acceptor" evidence="1">
    <location>
        <position position="89"/>
    </location>
</feature>
<feature type="site" description="Transition state stabilizer" evidence="1">
    <location>
        <position position="198"/>
    </location>
</feature>
<keyword id="KW-0053">Apoptosis</keyword>
<keyword id="KW-0072">Autophagy</keyword>
<keyword id="KW-0963">Cytoplasm</keyword>
<keyword id="KW-0378">Hydrolase</keyword>
<keyword id="KW-0496">Mitochondrion</keyword>
<keyword id="KW-0539">Nucleus</keyword>
<keyword id="KW-1185">Reference proteome</keyword>
<evidence type="ECO:0000250" key="1">
    <source>
        <dbReference type="UniProtKB" id="Q7ZVE3"/>
    </source>
</evidence>
<evidence type="ECO:0000250" key="2">
    <source>
        <dbReference type="UniProtKB" id="Q8BZA9"/>
    </source>
</evidence>
<evidence type="ECO:0000250" key="3">
    <source>
        <dbReference type="UniProtKB" id="Q9NQ88"/>
    </source>
</evidence>
<evidence type="ECO:0000305" key="4"/>
<comment type="function">
    <text evidence="2 3">Fructose-bisphosphatase hydrolyzing fructose-2,6-bisphosphate as well as fructose-1,6-bisphosphate. Acts as a negative regulator of glycolysis by lowering intracellular levels of fructose-2,6-bisphosphate in a p53/TP53-dependent manner, resulting in the pentose phosphate pathway (PPP) activation and NADPH production. Contributes to the generation of reduced glutathione to cause a decrease in intracellular reactive oxygen species (ROS) content, correlating with its ability to protect cells from oxidative or metabolic stress-induced cell death. May play a role in mitophagy inhibition.</text>
</comment>
<comment type="catalytic activity">
    <reaction evidence="3">
        <text>beta-D-fructose 2,6-bisphosphate + H2O = beta-D-fructose 6-phosphate + phosphate</text>
        <dbReference type="Rhea" id="RHEA:17289"/>
        <dbReference type="ChEBI" id="CHEBI:15377"/>
        <dbReference type="ChEBI" id="CHEBI:43474"/>
        <dbReference type="ChEBI" id="CHEBI:57634"/>
        <dbReference type="ChEBI" id="CHEBI:58579"/>
        <dbReference type="EC" id="3.1.3.46"/>
    </reaction>
</comment>
<comment type="subcellular location">
    <subcellularLocation>
        <location evidence="2">Cytoplasm</location>
    </subcellularLocation>
    <subcellularLocation>
        <location evidence="3">Nucleus</location>
    </subcellularLocation>
    <subcellularLocation>
        <location evidence="2">Mitochondrion</location>
    </subcellularLocation>
</comment>
<comment type="similarity">
    <text evidence="4">Belongs to the phosphoglycerate mutase family.</text>
</comment>
<comment type="caution">
    <text evidence="4">Not expected to have any kinase activity.</text>
</comment>